<name>SNU13_KLULA</name>
<proteinExistence type="inferred from homology"/>
<reference key="1">
    <citation type="journal article" date="2004" name="Nature">
        <title>Genome evolution in yeasts.</title>
        <authorList>
            <person name="Dujon B."/>
            <person name="Sherman D."/>
            <person name="Fischer G."/>
            <person name="Durrens P."/>
            <person name="Casaregola S."/>
            <person name="Lafontaine I."/>
            <person name="de Montigny J."/>
            <person name="Marck C."/>
            <person name="Neuveglise C."/>
            <person name="Talla E."/>
            <person name="Goffard N."/>
            <person name="Frangeul L."/>
            <person name="Aigle M."/>
            <person name="Anthouard V."/>
            <person name="Babour A."/>
            <person name="Barbe V."/>
            <person name="Barnay S."/>
            <person name="Blanchin S."/>
            <person name="Beckerich J.-M."/>
            <person name="Beyne E."/>
            <person name="Bleykasten C."/>
            <person name="Boisrame A."/>
            <person name="Boyer J."/>
            <person name="Cattolico L."/>
            <person name="Confanioleri F."/>
            <person name="de Daruvar A."/>
            <person name="Despons L."/>
            <person name="Fabre E."/>
            <person name="Fairhead C."/>
            <person name="Ferry-Dumazet H."/>
            <person name="Groppi A."/>
            <person name="Hantraye F."/>
            <person name="Hennequin C."/>
            <person name="Jauniaux N."/>
            <person name="Joyet P."/>
            <person name="Kachouri R."/>
            <person name="Kerrest A."/>
            <person name="Koszul R."/>
            <person name="Lemaire M."/>
            <person name="Lesur I."/>
            <person name="Ma L."/>
            <person name="Muller H."/>
            <person name="Nicaud J.-M."/>
            <person name="Nikolski M."/>
            <person name="Oztas S."/>
            <person name="Ozier-Kalogeropoulos O."/>
            <person name="Pellenz S."/>
            <person name="Potier S."/>
            <person name="Richard G.-F."/>
            <person name="Straub M.-L."/>
            <person name="Suleau A."/>
            <person name="Swennen D."/>
            <person name="Tekaia F."/>
            <person name="Wesolowski-Louvel M."/>
            <person name="Westhof E."/>
            <person name="Wirth B."/>
            <person name="Zeniou-Meyer M."/>
            <person name="Zivanovic Y."/>
            <person name="Bolotin-Fukuhara M."/>
            <person name="Thierry A."/>
            <person name="Bouchier C."/>
            <person name="Caudron B."/>
            <person name="Scarpelli C."/>
            <person name="Gaillardin C."/>
            <person name="Weissenbach J."/>
            <person name="Wincker P."/>
            <person name="Souciet J.-L."/>
        </authorList>
    </citation>
    <scope>NUCLEOTIDE SEQUENCE [LARGE SCALE GENOMIC DNA]</scope>
    <source>
        <strain>ATCC 8585 / CBS 2359 / DSM 70799 / NBRC 1267 / NRRL Y-1140 / WM37</strain>
    </source>
</reference>
<sequence>MSAPNPKAFPLADATLSQQILDVVQQASNMRQLKKGANEATKTLNRGISEFIIMAADCEPIEILLHLPLLCEDKNVPYVFVPSRTALGRACGVSRPVIAASITTNDASAIKSQIYAVKDKIETLLI</sequence>
<evidence type="ECO:0000250" key="1"/>
<evidence type="ECO:0000305" key="2"/>
<feature type="chain" id="PRO_0000290661" description="13 kDa ribonucleoprotein-associated protein">
    <location>
        <begin position="1"/>
        <end position="126"/>
    </location>
</feature>
<comment type="function">
    <text evidence="1">Common component of the spliceosome and rRNA processing machinery. In association with the spliceosomal U4/U6.U5 tri-snRNP particle, required for splicing of pre-mRNA. In association with box C/D snoRNPs, required for processing of pre-ribosomal RNA (rRNA) and site-specific 2'-O-methylation of substrate RNAs. Essential for the accumulation and stability of U4 snRNA, U6 snRNA, and box C/D snoRNAs (By similarity).</text>
</comment>
<comment type="subunit">
    <text evidence="1">Component of the U3 snoRNP particle. Binds to the C'/D and B/C motifs in U3 snoRNA. Component of the 25S U4/U6.U5 tri-snRNP particle, a subcomplex of the spliceosome. Binds to the 5' stem-loop of U4 snRNA (By similarity).</text>
</comment>
<comment type="subcellular location">
    <subcellularLocation>
        <location evidence="1">Nucleus</location>
        <location evidence="1">Nucleolus</location>
    </subcellularLocation>
</comment>
<comment type="similarity">
    <text evidence="2">Belongs to the eukaryotic ribosomal protein eL8 family.</text>
</comment>
<keyword id="KW-0507">mRNA processing</keyword>
<keyword id="KW-0508">mRNA splicing</keyword>
<keyword id="KW-0539">Nucleus</keyword>
<keyword id="KW-1185">Reference proteome</keyword>
<keyword id="KW-0687">Ribonucleoprotein</keyword>
<keyword id="KW-0690">Ribosome biogenesis</keyword>
<keyword id="KW-0694">RNA-binding</keyword>
<keyword id="KW-0698">rRNA processing</keyword>
<keyword id="KW-0747">Spliceosome</keyword>
<organism>
    <name type="scientific">Kluyveromyces lactis (strain ATCC 8585 / CBS 2359 / DSM 70799 / NBRC 1267 / NRRL Y-1140 / WM37)</name>
    <name type="common">Yeast</name>
    <name type="synonym">Candida sphaerica</name>
    <dbReference type="NCBI Taxonomy" id="284590"/>
    <lineage>
        <taxon>Eukaryota</taxon>
        <taxon>Fungi</taxon>
        <taxon>Dikarya</taxon>
        <taxon>Ascomycota</taxon>
        <taxon>Saccharomycotina</taxon>
        <taxon>Saccharomycetes</taxon>
        <taxon>Saccharomycetales</taxon>
        <taxon>Saccharomycetaceae</taxon>
        <taxon>Kluyveromyces</taxon>
    </lineage>
</organism>
<protein>
    <recommendedName>
        <fullName>13 kDa ribonucleoprotein-associated protein</fullName>
    </recommendedName>
</protein>
<dbReference type="EMBL" id="CR382125">
    <property type="protein sequence ID" value="CAH00057.1"/>
    <property type="molecule type" value="Genomic_DNA"/>
</dbReference>
<dbReference type="RefSeq" id="XP_454971.1">
    <property type="nucleotide sequence ID" value="XM_454971.1"/>
</dbReference>
<dbReference type="SMR" id="Q6CM69"/>
<dbReference type="FunCoup" id="Q6CM69">
    <property type="interactions" value="1393"/>
</dbReference>
<dbReference type="STRING" id="284590.Q6CM69"/>
<dbReference type="PaxDb" id="284590-Q6CM69"/>
<dbReference type="KEGG" id="kla:KLLA0_E22529g"/>
<dbReference type="eggNOG" id="KOG3387">
    <property type="taxonomic scope" value="Eukaryota"/>
</dbReference>
<dbReference type="HOGENOM" id="CLU_084513_4_1_1"/>
<dbReference type="InParanoid" id="Q6CM69"/>
<dbReference type="Proteomes" id="UP000000598">
    <property type="component" value="Chromosome E"/>
</dbReference>
<dbReference type="GO" id="GO:0005730">
    <property type="term" value="C:nucleolus"/>
    <property type="evidence" value="ECO:0007669"/>
    <property type="project" value="UniProtKB-SubCell"/>
</dbReference>
<dbReference type="GO" id="GO:0005681">
    <property type="term" value="C:spliceosomal complex"/>
    <property type="evidence" value="ECO:0007669"/>
    <property type="project" value="UniProtKB-KW"/>
</dbReference>
<dbReference type="GO" id="GO:0003723">
    <property type="term" value="F:RNA binding"/>
    <property type="evidence" value="ECO:0007669"/>
    <property type="project" value="UniProtKB-KW"/>
</dbReference>
<dbReference type="GO" id="GO:0006397">
    <property type="term" value="P:mRNA processing"/>
    <property type="evidence" value="ECO:0007669"/>
    <property type="project" value="UniProtKB-KW"/>
</dbReference>
<dbReference type="GO" id="GO:0008380">
    <property type="term" value="P:RNA splicing"/>
    <property type="evidence" value="ECO:0007669"/>
    <property type="project" value="UniProtKB-KW"/>
</dbReference>
<dbReference type="GO" id="GO:0006364">
    <property type="term" value="P:rRNA processing"/>
    <property type="evidence" value="ECO:0007669"/>
    <property type="project" value="UniProtKB-KW"/>
</dbReference>
<dbReference type="CDD" id="cd21104">
    <property type="entry name" value="SNU13"/>
    <property type="match status" value="1"/>
</dbReference>
<dbReference type="FunFam" id="3.30.1330.30:FF:000002">
    <property type="entry name" value="NHP2-like protein 1 homolog"/>
    <property type="match status" value="1"/>
</dbReference>
<dbReference type="Gene3D" id="3.30.1330.30">
    <property type="match status" value="1"/>
</dbReference>
<dbReference type="InterPro" id="IPR050257">
    <property type="entry name" value="eL8/uL1-like"/>
</dbReference>
<dbReference type="InterPro" id="IPR002415">
    <property type="entry name" value="H/ACA_rnp_Nhp2-like"/>
</dbReference>
<dbReference type="InterPro" id="IPR029064">
    <property type="entry name" value="Ribosomal_eL30-like_sf"/>
</dbReference>
<dbReference type="InterPro" id="IPR004037">
    <property type="entry name" value="Ribosomal_eL8-like_CS"/>
</dbReference>
<dbReference type="InterPro" id="IPR004038">
    <property type="entry name" value="Ribosomal_eL8/eL30/eS12/Gad45"/>
</dbReference>
<dbReference type="InterPro" id="IPR018492">
    <property type="entry name" value="Ribosomal_eL8/Nhp2"/>
</dbReference>
<dbReference type="PANTHER" id="PTHR23105">
    <property type="entry name" value="RIBOSOMAL PROTEIN L7AE FAMILY MEMBER"/>
    <property type="match status" value="1"/>
</dbReference>
<dbReference type="Pfam" id="PF01248">
    <property type="entry name" value="Ribosomal_L7Ae"/>
    <property type="match status" value="1"/>
</dbReference>
<dbReference type="PRINTS" id="PR00881">
    <property type="entry name" value="L7ARS6FAMILY"/>
</dbReference>
<dbReference type="PRINTS" id="PR00883">
    <property type="entry name" value="NUCLEARHMG"/>
</dbReference>
<dbReference type="SUPFAM" id="SSF55315">
    <property type="entry name" value="L30e-like"/>
    <property type="match status" value="1"/>
</dbReference>
<dbReference type="PROSITE" id="PS01082">
    <property type="entry name" value="RIBOSOMAL_L7AE"/>
    <property type="match status" value="1"/>
</dbReference>
<gene>
    <name type="primary">SNU13</name>
    <name type="ordered locus">KLLA0E22627g</name>
</gene>
<accession>Q6CM69</accession>